<proteinExistence type="evidence at transcript level"/>
<keyword id="KW-0150">Chloroplast</keyword>
<keyword id="KW-0934">Plastid</keyword>
<keyword id="KW-0658">Purine biosynthesis</keyword>
<keyword id="KW-0808">Transferase</keyword>
<keyword id="KW-0809">Transit peptide</keyword>
<dbReference type="EC" id="2.1.2.2"/>
<dbReference type="EMBL" id="U30875">
    <property type="protein sequence ID" value="AAA75367.2"/>
    <property type="molecule type" value="mRNA"/>
</dbReference>
<dbReference type="EMBL" id="AF160196">
    <property type="protein sequence ID" value="AAD45353.2"/>
    <property type="molecule type" value="Genomic_DNA"/>
</dbReference>
<dbReference type="EMBL" id="AY189137">
    <property type="protein sequence ID" value="AAO25114.1"/>
    <property type="molecule type" value="mRNA"/>
</dbReference>
<dbReference type="EMBL" id="AY189138">
    <property type="protein sequence ID" value="AAO25115.1"/>
    <property type="molecule type" value="mRNA"/>
</dbReference>
<dbReference type="PIR" id="T11574">
    <property type="entry name" value="T11574"/>
</dbReference>
<dbReference type="RefSeq" id="NP_001363005.1">
    <property type="nucleotide sequence ID" value="NM_001376076.1"/>
</dbReference>
<dbReference type="SMR" id="P52423"/>
<dbReference type="EnsemblPlants" id="Vigun01g091700.1.v1.2">
    <property type="protein sequence ID" value="Vigun01g091700.1.v1.2"/>
    <property type="gene ID" value="Vigun01g091700.v1.2"/>
</dbReference>
<dbReference type="EnsemblPlants" id="Vigun01g091700.10.v1.2">
    <property type="protein sequence ID" value="Vigun01g091700.10.v1.2"/>
    <property type="gene ID" value="Vigun01g091700.v1.2"/>
</dbReference>
<dbReference type="EnsemblPlants" id="Vigun01g091700.2.v1.2">
    <property type="protein sequence ID" value="Vigun01g091700.2.v1.2"/>
    <property type="gene ID" value="Vigun01g091700.v1.2"/>
</dbReference>
<dbReference type="EnsemblPlants" id="Vigun01g091700.3.v1.2">
    <property type="protein sequence ID" value="Vigun01g091700.3.v1.2"/>
    <property type="gene ID" value="Vigun01g091700.v1.2"/>
</dbReference>
<dbReference type="EnsemblPlants" id="Vigun01g091700.4.v1.2">
    <property type="protein sequence ID" value="Vigun01g091700.4.v1.2"/>
    <property type="gene ID" value="Vigun01g091700.v1.2"/>
</dbReference>
<dbReference type="EnsemblPlants" id="Vigun01g091700.5.v1.2">
    <property type="protein sequence ID" value="Vigun01g091700.5.v1.2"/>
    <property type="gene ID" value="Vigun01g091700.v1.2"/>
</dbReference>
<dbReference type="EnsemblPlants" id="Vigun01g091700.6.v1.2">
    <property type="protein sequence ID" value="Vigun01g091700.6.v1.2"/>
    <property type="gene ID" value="Vigun01g091700.v1.2"/>
</dbReference>
<dbReference type="EnsemblPlants" id="Vigun01g091700.7.v1.2">
    <property type="protein sequence ID" value="Vigun01g091700.7.v1.2"/>
    <property type="gene ID" value="Vigun01g091700.v1.2"/>
</dbReference>
<dbReference type="EnsemblPlants" id="Vigun01g091700.8.v1.2">
    <property type="protein sequence ID" value="Vigun01g091700.8.v1.2"/>
    <property type="gene ID" value="Vigun01g091700.v1.2"/>
</dbReference>
<dbReference type="EnsemblPlants" id="Vigun01g091700.9.v1.2">
    <property type="protein sequence ID" value="Vigun01g091700.9.v1.2"/>
    <property type="gene ID" value="Vigun01g091700.v1.2"/>
</dbReference>
<dbReference type="GeneID" id="114188452"/>
<dbReference type="Gramene" id="Vigun01g091700.1.v1.2">
    <property type="protein sequence ID" value="Vigun01g091700.1.v1.2"/>
    <property type="gene ID" value="Vigun01g091700.v1.2"/>
</dbReference>
<dbReference type="Gramene" id="Vigun01g091700.10.v1.2">
    <property type="protein sequence ID" value="Vigun01g091700.10.v1.2"/>
    <property type="gene ID" value="Vigun01g091700.v1.2"/>
</dbReference>
<dbReference type="Gramene" id="Vigun01g091700.2.v1.2">
    <property type="protein sequence ID" value="Vigun01g091700.2.v1.2"/>
    <property type="gene ID" value="Vigun01g091700.v1.2"/>
</dbReference>
<dbReference type="Gramene" id="Vigun01g091700.3.v1.2">
    <property type="protein sequence ID" value="Vigun01g091700.3.v1.2"/>
    <property type="gene ID" value="Vigun01g091700.v1.2"/>
</dbReference>
<dbReference type="Gramene" id="Vigun01g091700.4.v1.2">
    <property type="protein sequence ID" value="Vigun01g091700.4.v1.2"/>
    <property type="gene ID" value="Vigun01g091700.v1.2"/>
</dbReference>
<dbReference type="Gramene" id="Vigun01g091700.5.v1.2">
    <property type="protein sequence ID" value="Vigun01g091700.5.v1.2"/>
    <property type="gene ID" value="Vigun01g091700.v1.2"/>
</dbReference>
<dbReference type="Gramene" id="Vigun01g091700.6.v1.2">
    <property type="protein sequence ID" value="Vigun01g091700.6.v1.2"/>
    <property type="gene ID" value="Vigun01g091700.v1.2"/>
</dbReference>
<dbReference type="Gramene" id="Vigun01g091700.7.v1.2">
    <property type="protein sequence ID" value="Vigun01g091700.7.v1.2"/>
    <property type="gene ID" value="Vigun01g091700.v1.2"/>
</dbReference>
<dbReference type="Gramene" id="Vigun01g091700.8.v1.2">
    <property type="protein sequence ID" value="Vigun01g091700.8.v1.2"/>
    <property type="gene ID" value="Vigun01g091700.v1.2"/>
</dbReference>
<dbReference type="Gramene" id="Vigun01g091700.9.v1.2">
    <property type="protein sequence ID" value="Vigun01g091700.9.v1.2"/>
    <property type="gene ID" value="Vigun01g091700.v1.2"/>
</dbReference>
<dbReference type="OrthoDB" id="2018833at2759"/>
<dbReference type="UniPathway" id="UPA00074">
    <property type="reaction ID" value="UER00126"/>
</dbReference>
<dbReference type="GO" id="GO:0009507">
    <property type="term" value="C:chloroplast"/>
    <property type="evidence" value="ECO:0007669"/>
    <property type="project" value="UniProtKB-SubCell"/>
</dbReference>
<dbReference type="GO" id="GO:0004644">
    <property type="term" value="F:phosphoribosylglycinamide formyltransferase activity"/>
    <property type="evidence" value="ECO:0007669"/>
    <property type="project" value="UniProtKB-EC"/>
</dbReference>
<dbReference type="GO" id="GO:0006189">
    <property type="term" value="P:'de novo' IMP biosynthetic process"/>
    <property type="evidence" value="ECO:0007669"/>
    <property type="project" value="UniProtKB-UniPathway"/>
</dbReference>
<dbReference type="CDD" id="cd08645">
    <property type="entry name" value="FMT_core_GART"/>
    <property type="match status" value="1"/>
</dbReference>
<dbReference type="FunFam" id="3.40.50.170:FF:000011">
    <property type="entry name" value="phosphoribosylglycinamide formyltransferase, chloroplastic"/>
    <property type="match status" value="1"/>
</dbReference>
<dbReference type="Gene3D" id="3.40.50.170">
    <property type="entry name" value="Formyl transferase, N-terminal domain"/>
    <property type="match status" value="1"/>
</dbReference>
<dbReference type="HAMAP" id="MF_01930">
    <property type="entry name" value="PurN"/>
    <property type="match status" value="1"/>
</dbReference>
<dbReference type="InterPro" id="IPR002376">
    <property type="entry name" value="Formyl_transf_N"/>
</dbReference>
<dbReference type="InterPro" id="IPR036477">
    <property type="entry name" value="Formyl_transf_N_sf"/>
</dbReference>
<dbReference type="InterPro" id="IPR004607">
    <property type="entry name" value="GART"/>
</dbReference>
<dbReference type="InterPro" id="IPR001555">
    <property type="entry name" value="GART_AS"/>
</dbReference>
<dbReference type="NCBIfam" id="TIGR00639">
    <property type="entry name" value="PurN"/>
    <property type="match status" value="1"/>
</dbReference>
<dbReference type="PANTHER" id="PTHR43369">
    <property type="entry name" value="PHOSPHORIBOSYLGLYCINAMIDE FORMYLTRANSFERASE"/>
    <property type="match status" value="1"/>
</dbReference>
<dbReference type="PANTHER" id="PTHR43369:SF2">
    <property type="entry name" value="PHOSPHORIBOSYLGLYCINAMIDE FORMYLTRANSFERASE"/>
    <property type="match status" value="1"/>
</dbReference>
<dbReference type="Pfam" id="PF00551">
    <property type="entry name" value="Formyl_trans_N"/>
    <property type="match status" value="1"/>
</dbReference>
<dbReference type="PIRSF" id="PIRSF036480">
    <property type="entry name" value="FormyFH4_hydr"/>
    <property type="match status" value="1"/>
</dbReference>
<dbReference type="SUPFAM" id="SSF53328">
    <property type="entry name" value="Formyltransferase"/>
    <property type="match status" value="1"/>
</dbReference>
<dbReference type="PROSITE" id="PS00373">
    <property type="entry name" value="GART"/>
    <property type="match status" value="1"/>
</dbReference>
<protein>
    <recommendedName>
        <fullName>Phosphoribosylglycinamide formyltransferase, chloroplastic</fullName>
        <ecNumber>2.1.2.2</ecNumber>
    </recommendedName>
    <alternativeName>
        <fullName>5'-phosphoribosylglycinamide transformylase</fullName>
    </alternativeName>
    <alternativeName>
        <fullName>GAR transformylase</fullName>
        <shortName>GART</shortName>
    </alternativeName>
</protein>
<sequence length="312" mass="34583">MEAQQIISRFCPKSSLAPSIPMVKQPFSLNFPPLHSLSSYPFLQSQNLGFPTGALHAISFVHKEVCSSSWRIWCSKSSSSTAEPEEDHEVRAQVTVRRKKLAVFVSGGGSNFRSIHEASKKGSLHGDVTVLVTNKSECGGAQYARNNGIPVILFPKAKDEPKGLSPCDLVDTLRKFEVDFVLLAGYLKLIPVELIRAFERSIFNIHPSLLPAFGGKGYYGMKVHKAVIASGARFSGPTIHFVDEHYDTGRILAQRVVPVLANDTAEELAARVLNEEHQLYVEVVEALCEERIVWRKDGVPLIQSRENPNEFL</sequence>
<gene>
    <name type="primary">PUR3</name>
</gene>
<name>PUR3_VIGUN</name>
<reference key="1">
    <citation type="submission" date="2003-01" db="EMBL/GenBank/DDBJ databases">
        <title>Vupur3 mRNA from cowpea nodules encoding glycinamide ribonucleotide transformylase.</title>
        <authorList>
            <person name="Hall D.J."/>
            <person name="Bussell J.D."/>
            <person name="Mann A.J."/>
            <person name="Goggin D.E."/>
            <person name="Atkins C.A."/>
            <person name="Smith P.M.C."/>
        </authorList>
    </citation>
    <scope>NUCLEOTIDE SEQUENCE</scope>
    <source>
        <strain>cv. Vita 3</strain>
        <tissue>Root nodule</tissue>
    </source>
</reference>
<organism>
    <name type="scientific">Vigna unguiculata</name>
    <name type="common">Cowpea</name>
    <dbReference type="NCBI Taxonomy" id="3917"/>
    <lineage>
        <taxon>Eukaryota</taxon>
        <taxon>Viridiplantae</taxon>
        <taxon>Streptophyta</taxon>
        <taxon>Embryophyta</taxon>
        <taxon>Tracheophyta</taxon>
        <taxon>Spermatophyta</taxon>
        <taxon>Magnoliopsida</taxon>
        <taxon>eudicotyledons</taxon>
        <taxon>Gunneridae</taxon>
        <taxon>Pentapetalae</taxon>
        <taxon>rosids</taxon>
        <taxon>fabids</taxon>
        <taxon>Fabales</taxon>
        <taxon>Fabaceae</taxon>
        <taxon>Papilionoideae</taxon>
        <taxon>50 kb inversion clade</taxon>
        <taxon>NPAAA clade</taxon>
        <taxon>indigoferoid/millettioid clade</taxon>
        <taxon>Phaseoleae</taxon>
        <taxon>Vigna</taxon>
    </lineage>
</organism>
<comment type="catalytic activity">
    <reaction>
        <text>N(1)-(5-phospho-beta-D-ribosyl)glycinamide + (6R)-10-formyltetrahydrofolate = N(2)-formyl-N(1)-(5-phospho-beta-D-ribosyl)glycinamide + (6S)-5,6,7,8-tetrahydrofolate + H(+)</text>
        <dbReference type="Rhea" id="RHEA:15053"/>
        <dbReference type="ChEBI" id="CHEBI:15378"/>
        <dbReference type="ChEBI" id="CHEBI:57453"/>
        <dbReference type="ChEBI" id="CHEBI:143788"/>
        <dbReference type="ChEBI" id="CHEBI:147286"/>
        <dbReference type="ChEBI" id="CHEBI:195366"/>
        <dbReference type="EC" id="2.1.2.2"/>
    </reaction>
</comment>
<comment type="pathway">
    <text>Purine metabolism; IMP biosynthesis via de novo pathway; N(2)-formyl-N(1)-(5-phospho-D-ribosyl)glycinamide from N(1)-(5-phospho-D-ribosyl)glycinamide (10-formyl THF route): step 1/1.</text>
</comment>
<comment type="subcellular location">
    <subcellularLocation>
        <location>Plastid</location>
        <location>Chloroplast</location>
    </subcellularLocation>
</comment>
<comment type="similarity">
    <text evidence="3">Belongs to the GART family.</text>
</comment>
<accession>P52423</accession>
<accession>Q9XGS3</accession>
<feature type="transit peptide" description="Chloroplast" evidence="2">
    <location>
        <begin position="1"/>
        <end position="73"/>
    </location>
</feature>
<feature type="chain" id="PRO_0000029878" description="Phosphoribosylglycinamide formyltransferase, chloroplastic">
    <location>
        <begin position="74"/>
        <end position="312"/>
    </location>
</feature>
<feature type="active site" description="Proton donor" evidence="1">
    <location>
        <position position="206"/>
    </location>
</feature>
<feature type="binding site" evidence="1">
    <location>
        <begin position="109"/>
        <end position="111"/>
    </location>
    <ligand>
        <name>N(1)-(5-phospho-beta-D-ribosyl)glycinamide</name>
        <dbReference type="ChEBI" id="CHEBI:143788"/>
    </ligand>
</feature>
<feature type="binding site" evidence="1">
    <location>
        <position position="162"/>
    </location>
    <ligand>
        <name>(6R)-10-formyltetrahydrofolate</name>
        <dbReference type="ChEBI" id="CHEBI:195366"/>
    </ligand>
</feature>
<feature type="binding site" evidence="1">
    <location>
        <begin position="187"/>
        <end position="190"/>
    </location>
    <ligand>
        <name>(6R)-10-formyltetrahydrofolate</name>
        <dbReference type="ChEBI" id="CHEBI:195366"/>
    </ligand>
</feature>
<feature type="binding site" evidence="1">
    <location>
        <position position="204"/>
    </location>
    <ligand>
        <name>(6R)-10-formyltetrahydrofolate</name>
        <dbReference type="ChEBI" id="CHEBI:195366"/>
    </ligand>
</feature>
<feature type="binding site" evidence="1">
    <location>
        <position position="247"/>
    </location>
    <ligand>
        <name>(6R)-10-formyltetrahydrofolate</name>
        <dbReference type="ChEBI" id="CHEBI:195366"/>
    </ligand>
</feature>
<feature type="binding site" evidence="1">
    <location>
        <position position="276"/>
    </location>
    <ligand>
        <name>N(1)-(5-phospho-beta-D-ribosyl)glycinamide</name>
        <dbReference type="ChEBI" id="CHEBI:143788"/>
    </ligand>
</feature>
<feature type="site" description="Raises pKa of active site His" evidence="1">
    <location>
        <position position="247"/>
    </location>
</feature>
<evidence type="ECO:0000250" key="1"/>
<evidence type="ECO:0000255" key="2"/>
<evidence type="ECO:0000305" key="3"/>